<organism>
    <name type="scientific">Neisseria gonorrhoeae (strain ATCC 700825 / FA 1090)</name>
    <dbReference type="NCBI Taxonomy" id="242231"/>
    <lineage>
        <taxon>Bacteria</taxon>
        <taxon>Pseudomonadati</taxon>
        <taxon>Pseudomonadota</taxon>
        <taxon>Betaproteobacteria</taxon>
        <taxon>Neisseriales</taxon>
        <taxon>Neisseriaceae</taxon>
        <taxon>Neisseria</taxon>
    </lineage>
</organism>
<name>RNPA_NEIG1</name>
<protein>
    <recommendedName>
        <fullName evidence="1">Ribonuclease P protein component</fullName>
        <shortName evidence="1">RNase P protein</shortName>
        <shortName evidence="1">RNaseP protein</shortName>
        <ecNumber evidence="1">3.1.26.5</ecNumber>
    </recommendedName>
    <alternativeName>
        <fullName evidence="1">Protein C5</fullName>
    </alternativeName>
</protein>
<comment type="function">
    <text evidence="1">RNaseP catalyzes the removal of the 5'-leader sequence from pre-tRNA to produce the mature 5'-terminus. It can also cleave other RNA substrates such as 4.5S RNA. The protein component plays an auxiliary but essential role in vivo by binding to the 5'-leader sequence and broadening the substrate specificity of the ribozyme.</text>
</comment>
<comment type="catalytic activity">
    <reaction evidence="1">
        <text>Endonucleolytic cleavage of RNA, removing 5'-extranucleotides from tRNA precursor.</text>
        <dbReference type="EC" id="3.1.26.5"/>
    </reaction>
</comment>
<comment type="subunit">
    <text evidence="1">Consists of a catalytic RNA component (M1 or rnpB) and a protein subunit.</text>
</comment>
<comment type="similarity">
    <text evidence="1">Belongs to the RnpA family.</text>
</comment>
<dbReference type="EC" id="3.1.26.5" evidence="1"/>
<dbReference type="EMBL" id="AE004969">
    <property type="protein sequence ID" value="AAW90774.1"/>
    <property type="molecule type" value="Genomic_DNA"/>
</dbReference>
<dbReference type="RefSeq" id="WP_003687193.1">
    <property type="nucleotide sequence ID" value="NC_002946.2"/>
</dbReference>
<dbReference type="RefSeq" id="YP_209186.1">
    <property type="nucleotide sequence ID" value="NC_002946.2"/>
</dbReference>
<dbReference type="SMR" id="Q5F4W3"/>
<dbReference type="STRING" id="242231.NGO_2181"/>
<dbReference type="GeneID" id="66754508"/>
<dbReference type="KEGG" id="ngo:NGO_2181"/>
<dbReference type="PATRIC" id="fig|242231.10.peg.2634"/>
<dbReference type="HOGENOM" id="CLU_117179_11_2_4"/>
<dbReference type="Proteomes" id="UP000000535">
    <property type="component" value="Chromosome"/>
</dbReference>
<dbReference type="GO" id="GO:0030677">
    <property type="term" value="C:ribonuclease P complex"/>
    <property type="evidence" value="ECO:0007669"/>
    <property type="project" value="TreeGrafter"/>
</dbReference>
<dbReference type="GO" id="GO:0042781">
    <property type="term" value="F:3'-tRNA processing endoribonuclease activity"/>
    <property type="evidence" value="ECO:0007669"/>
    <property type="project" value="TreeGrafter"/>
</dbReference>
<dbReference type="GO" id="GO:0004526">
    <property type="term" value="F:ribonuclease P activity"/>
    <property type="evidence" value="ECO:0007669"/>
    <property type="project" value="UniProtKB-UniRule"/>
</dbReference>
<dbReference type="GO" id="GO:0000049">
    <property type="term" value="F:tRNA binding"/>
    <property type="evidence" value="ECO:0007669"/>
    <property type="project" value="UniProtKB-UniRule"/>
</dbReference>
<dbReference type="GO" id="GO:0001682">
    <property type="term" value="P:tRNA 5'-leader removal"/>
    <property type="evidence" value="ECO:0007669"/>
    <property type="project" value="UniProtKB-UniRule"/>
</dbReference>
<dbReference type="FunFam" id="3.30.230.10:FF:000083">
    <property type="entry name" value="Ribonuclease P protein component"/>
    <property type="match status" value="1"/>
</dbReference>
<dbReference type="Gene3D" id="3.30.230.10">
    <property type="match status" value="1"/>
</dbReference>
<dbReference type="HAMAP" id="MF_00227">
    <property type="entry name" value="RNase_P"/>
    <property type="match status" value="1"/>
</dbReference>
<dbReference type="InterPro" id="IPR020568">
    <property type="entry name" value="Ribosomal_Su5_D2-typ_SF"/>
</dbReference>
<dbReference type="InterPro" id="IPR014721">
    <property type="entry name" value="Ribsml_uS5_D2-typ_fold_subgr"/>
</dbReference>
<dbReference type="InterPro" id="IPR000100">
    <property type="entry name" value="RNase_P"/>
</dbReference>
<dbReference type="InterPro" id="IPR020539">
    <property type="entry name" value="RNase_P_CS"/>
</dbReference>
<dbReference type="NCBIfam" id="TIGR00188">
    <property type="entry name" value="rnpA"/>
    <property type="match status" value="1"/>
</dbReference>
<dbReference type="PANTHER" id="PTHR33992">
    <property type="entry name" value="RIBONUCLEASE P PROTEIN COMPONENT"/>
    <property type="match status" value="1"/>
</dbReference>
<dbReference type="PANTHER" id="PTHR33992:SF1">
    <property type="entry name" value="RIBONUCLEASE P PROTEIN COMPONENT"/>
    <property type="match status" value="1"/>
</dbReference>
<dbReference type="Pfam" id="PF00825">
    <property type="entry name" value="Ribonuclease_P"/>
    <property type="match status" value="1"/>
</dbReference>
<dbReference type="SUPFAM" id="SSF54211">
    <property type="entry name" value="Ribosomal protein S5 domain 2-like"/>
    <property type="match status" value="1"/>
</dbReference>
<dbReference type="PROSITE" id="PS00648">
    <property type="entry name" value="RIBONUCLEASE_P"/>
    <property type="match status" value="1"/>
</dbReference>
<evidence type="ECO:0000255" key="1">
    <source>
        <dbReference type="HAMAP-Rule" id="MF_00227"/>
    </source>
</evidence>
<accession>Q5F4W3</accession>
<keyword id="KW-0255">Endonuclease</keyword>
<keyword id="KW-0378">Hydrolase</keyword>
<keyword id="KW-0540">Nuclease</keyword>
<keyword id="KW-1185">Reference proteome</keyword>
<keyword id="KW-0694">RNA-binding</keyword>
<keyword id="KW-0819">tRNA processing</keyword>
<proteinExistence type="inferred from homology"/>
<reference key="1">
    <citation type="submission" date="2003-03" db="EMBL/GenBank/DDBJ databases">
        <title>The complete genome sequence of Neisseria gonorrhoeae.</title>
        <authorList>
            <person name="Lewis L.A."/>
            <person name="Gillaspy A.F."/>
            <person name="McLaughlin R.E."/>
            <person name="Gipson M."/>
            <person name="Ducey T.F."/>
            <person name="Ownbey T."/>
            <person name="Hartman K."/>
            <person name="Nydick C."/>
            <person name="Carson M.B."/>
            <person name="Vaughn J."/>
            <person name="Thomson C."/>
            <person name="Song L."/>
            <person name="Lin S."/>
            <person name="Yuan X."/>
            <person name="Najar F."/>
            <person name="Zhan M."/>
            <person name="Ren Q."/>
            <person name="Zhu H."/>
            <person name="Qi S."/>
            <person name="Kenton S.M."/>
            <person name="Lai H."/>
            <person name="White J.D."/>
            <person name="Clifton S."/>
            <person name="Roe B.A."/>
            <person name="Dyer D.W."/>
        </authorList>
    </citation>
    <scope>NUCLEOTIDE SEQUENCE [LARGE SCALE GENOMIC DNA]</scope>
    <source>
        <strain>ATCC 700825 / FA 1090</strain>
    </source>
</reference>
<feature type="chain" id="PRO_0000198496" description="Ribonuclease P protein component">
    <location>
        <begin position="1"/>
        <end position="121"/>
    </location>
</feature>
<gene>
    <name evidence="1" type="primary">rnpA</name>
    <name type="ordered locus">NGO_2181</name>
</gene>
<sequence>MDYRFGRQYRLLKTDDFSSVFAFRNRRSRDLLQVSRSNGNGLDHPRIGLVVGKKTAKRANERNYMKRVIRDWFRLNKNRLPPQDFVVRVRRKFDRATAKQARAELAQLMFGNPATGCGKQV</sequence>